<reference key="1">
    <citation type="journal article" date="1984" name="Mol. Cell. Biol.">
        <title>Human thymidine kinase gene: molecular cloning and nucleotide sequence of a cDNA expressible in mammalian cells.</title>
        <authorList>
            <person name="Bradshaw H.D. Jr."/>
            <person name="Deininger P.L."/>
        </authorList>
    </citation>
    <scope>NUCLEOTIDE SEQUENCE [MRNA]</scope>
</reference>
<reference key="2">
    <citation type="journal article" date="1987" name="Gene">
        <title>Sequence, structure and promoter characterization of the human thymidine kinase gene.</title>
        <authorList>
            <person name="Flemington E."/>
            <person name="Bradshaw H.D. Jr."/>
            <person name="Traina-Dorge V."/>
            <person name="Slagel V."/>
            <person name="Deininger P.L."/>
        </authorList>
    </citation>
    <scope>NUCLEOTIDE SEQUENCE [GENOMIC DNA]</scope>
</reference>
<reference key="3">
    <citation type="journal article" date="2004" name="Nat. Genet.">
        <title>Complete sequencing and characterization of 21,243 full-length human cDNAs.</title>
        <authorList>
            <person name="Ota T."/>
            <person name="Suzuki Y."/>
            <person name="Nishikawa T."/>
            <person name="Otsuki T."/>
            <person name="Sugiyama T."/>
            <person name="Irie R."/>
            <person name="Wakamatsu A."/>
            <person name="Hayashi K."/>
            <person name="Sato H."/>
            <person name="Nagai K."/>
            <person name="Kimura K."/>
            <person name="Makita H."/>
            <person name="Sekine M."/>
            <person name="Obayashi M."/>
            <person name="Nishi T."/>
            <person name="Shibahara T."/>
            <person name="Tanaka T."/>
            <person name="Ishii S."/>
            <person name="Yamamoto J."/>
            <person name="Saito K."/>
            <person name="Kawai Y."/>
            <person name="Isono Y."/>
            <person name="Nakamura Y."/>
            <person name="Nagahari K."/>
            <person name="Murakami K."/>
            <person name="Yasuda T."/>
            <person name="Iwayanagi T."/>
            <person name="Wagatsuma M."/>
            <person name="Shiratori A."/>
            <person name="Sudo H."/>
            <person name="Hosoiri T."/>
            <person name="Kaku Y."/>
            <person name="Kodaira H."/>
            <person name="Kondo H."/>
            <person name="Sugawara M."/>
            <person name="Takahashi M."/>
            <person name="Kanda K."/>
            <person name="Yokoi T."/>
            <person name="Furuya T."/>
            <person name="Kikkawa E."/>
            <person name="Omura Y."/>
            <person name="Abe K."/>
            <person name="Kamihara K."/>
            <person name="Katsuta N."/>
            <person name="Sato K."/>
            <person name="Tanikawa M."/>
            <person name="Yamazaki M."/>
            <person name="Ninomiya K."/>
            <person name="Ishibashi T."/>
            <person name="Yamashita H."/>
            <person name="Murakawa K."/>
            <person name="Fujimori K."/>
            <person name="Tanai H."/>
            <person name="Kimata M."/>
            <person name="Watanabe M."/>
            <person name="Hiraoka S."/>
            <person name="Chiba Y."/>
            <person name="Ishida S."/>
            <person name="Ono Y."/>
            <person name="Takiguchi S."/>
            <person name="Watanabe S."/>
            <person name="Yosida M."/>
            <person name="Hotuta T."/>
            <person name="Kusano J."/>
            <person name="Kanehori K."/>
            <person name="Takahashi-Fujii A."/>
            <person name="Hara H."/>
            <person name="Tanase T.-O."/>
            <person name="Nomura Y."/>
            <person name="Togiya S."/>
            <person name="Komai F."/>
            <person name="Hara R."/>
            <person name="Takeuchi K."/>
            <person name="Arita M."/>
            <person name="Imose N."/>
            <person name="Musashino K."/>
            <person name="Yuuki H."/>
            <person name="Oshima A."/>
            <person name="Sasaki N."/>
            <person name="Aotsuka S."/>
            <person name="Yoshikawa Y."/>
            <person name="Matsunawa H."/>
            <person name="Ichihara T."/>
            <person name="Shiohata N."/>
            <person name="Sano S."/>
            <person name="Moriya S."/>
            <person name="Momiyama H."/>
            <person name="Satoh N."/>
            <person name="Takami S."/>
            <person name="Terashima Y."/>
            <person name="Suzuki O."/>
            <person name="Nakagawa S."/>
            <person name="Senoh A."/>
            <person name="Mizoguchi H."/>
            <person name="Goto Y."/>
            <person name="Shimizu F."/>
            <person name="Wakebe H."/>
            <person name="Hishigaki H."/>
            <person name="Watanabe T."/>
            <person name="Sugiyama A."/>
            <person name="Takemoto M."/>
            <person name="Kawakami B."/>
            <person name="Yamazaki M."/>
            <person name="Watanabe K."/>
            <person name="Kumagai A."/>
            <person name="Itakura S."/>
            <person name="Fukuzumi Y."/>
            <person name="Fujimori Y."/>
            <person name="Komiyama M."/>
            <person name="Tashiro H."/>
            <person name="Tanigami A."/>
            <person name="Fujiwara T."/>
            <person name="Ono T."/>
            <person name="Yamada K."/>
            <person name="Fujii Y."/>
            <person name="Ozaki K."/>
            <person name="Hirao M."/>
            <person name="Ohmori Y."/>
            <person name="Kawabata A."/>
            <person name="Hikiji T."/>
            <person name="Kobatake N."/>
            <person name="Inagaki H."/>
            <person name="Ikema Y."/>
            <person name="Okamoto S."/>
            <person name="Okitani R."/>
            <person name="Kawakami T."/>
            <person name="Noguchi S."/>
            <person name="Itoh T."/>
            <person name="Shigeta K."/>
            <person name="Senba T."/>
            <person name="Matsumura K."/>
            <person name="Nakajima Y."/>
            <person name="Mizuno T."/>
            <person name="Morinaga M."/>
            <person name="Sasaki M."/>
            <person name="Togashi T."/>
            <person name="Oyama M."/>
            <person name="Hata H."/>
            <person name="Watanabe M."/>
            <person name="Komatsu T."/>
            <person name="Mizushima-Sugano J."/>
            <person name="Satoh T."/>
            <person name="Shirai Y."/>
            <person name="Takahashi Y."/>
            <person name="Nakagawa K."/>
            <person name="Okumura K."/>
            <person name="Nagase T."/>
            <person name="Nomura N."/>
            <person name="Kikuchi H."/>
            <person name="Masuho Y."/>
            <person name="Yamashita R."/>
            <person name="Nakai K."/>
            <person name="Yada T."/>
            <person name="Nakamura Y."/>
            <person name="Ohara O."/>
            <person name="Isogai T."/>
            <person name="Sugano S."/>
        </authorList>
    </citation>
    <scope>NUCLEOTIDE SEQUENCE [LARGE SCALE MRNA]</scope>
</reference>
<reference key="4">
    <citation type="submission" date="2004-10" db="EMBL/GenBank/DDBJ databases">
        <title>Cloning of human full-length CDSs in BD Creator(TM) system donor vector.</title>
        <authorList>
            <person name="Kalnine N."/>
            <person name="Chen X."/>
            <person name="Rolfs A."/>
            <person name="Halleck A."/>
            <person name="Hines L."/>
            <person name="Eisenstein S."/>
            <person name="Koundinya M."/>
            <person name="Raphael J."/>
            <person name="Moreira D."/>
            <person name="Kelley T."/>
            <person name="LaBaer J."/>
            <person name="Lin Y."/>
            <person name="Phelan M."/>
            <person name="Farmer A."/>
        </authorList>
    </citation>
    <scope>NUCLEOTIDE SEQUENCE [LARGE SCALE MRNA]</scope>
</reference>
<reference key="5">
    <citation type="journal article" date="2004" name="Genome Res.">
        <title>The status, quality, and expansion of the NIH full-length cDNA project: the Mammalian Gene Collection (MGC).</title>
        <authorList>
            <consortium name="The MGC Project Team"/>
        </authorList>
    </citation>
    <scope>NUCLEOTIDE SEQUENCE [LARGE SCALE MRNA]</scope>
    <source>
        <tissue>Lymph</tissue>
        <tissue>Skin</tissue>
        <tissue>Uterus</tissue>
    </source>
</reference>
<reference key="6">
    <citation type="journal article" date="1986" name="Mol. Cell. Biol.">
        <title>Genetic analysis of the human thymidine kinase gene promoter.</title>
        <authorList>
            <person name="Kreidberg J.A."/>
            <person name="Kelly T.J."/>
        </authorList>
    </citation>
    <scope>NUCLEOTIDE SEQUENCE [GENOMIC DNA] OF 1-22</scope>
</reference>
<reference key="7">
    <citation type="journal article" date="1998" name="J. Biol. Chem.">
        <title>Serine 13 is the site of mitotic phosphorylation of human thymidine kinase.</title>
        <authorList>
            <person name="Chang Z.F."/>
            <person name="Huang D.Y."/>
            <person name="Chi L.M."/>
        </authorList>
    </citation>
    <scope>PHOSPHORYLATION AT SER-13</scope>
    <scope>MUTAGENESIS OF SER-13 AND SER-194</scope>
</reference>
<reference key="8">
    <citation type="journal article" date="2004" name="Biochem. Biophys. Res. Commun.">
        <title>Perturbation of ATP-induced tetramerization of human cytosolic thymidine kinase by substitution of serine-13 with aspartic acid at the mitotic phosphorylation site.</title>
        <authorList>
            <person name="Li C.L."/>
            <person name="Lu C.Y."/>
            <person name="Ke P.Y."/>
            <person name="Chang Z.F."/>
        </authorList>
    </citation>
    <scope>FUNCTION</scope>
    <scope>PHOSPHORYLATION AT SER-13</scope>
    <scope>MUTAGENESIS OF SER-13</scope>
    <scope>CATALYTIC ACTIVITY</scope>
    <scope>BIOPHYSICOCHEMICAL PROPERTIES</scope>
    <scope>SUBUNIT</scope>
</reference>
<reference key="9">
    <citation type="journal article" date="2004" name="Mol. Cell. Biol.">
        <title>Mitotic degradation of human thymidine kinase 1 is dependent on the anaphase-promoting complex/cyclosome-CDH1-mediated pathway.</title>
        <authorList>
            <person name="Ke P.Y."/>
            <person name="Chang Z.F."/>
        </authorList>
    </citation>
    <scope>FUNCTION</scope>
    <scope>DEVELOPMENTAL STAGE</scope>
    <scope>UBIQUITINATION</scope>
    <scope>MUTAGENESIS OF SER-13; 203-LYS--ASN-205; 203-LYS-GLU-204 AND LYS-203</scope>
    <scope>INTERACTION WITH FZR1</scope>
    <scope>DOMAIN</scope>
</reference>
<reference key="10">
    <citation type="journal article" date="2006" name="Nat. Biotechnol.">
        <title>A probability-based approach for high-throughput protein phosphorylation analysis and site localization.</title>
        <authorList>
            <person name="Beausoleil S.A."/>
            <person name="Villen J."/>
            <person name="Gerber S.A."/>
            <person name="Rush J."/>
            <person name="Gygi S.P."/>
        </authorList>
    </citation>
    <scope>PHOSPHORYLATION [LARGE SCALE ANALYSIS] AT SER-231</scope>
    <scope>IDENTIFICATION BY MASS SPECTROMETRY [LARGE SCALE ANALYSIS]</scope>
    <source>
        <tissue>Cervix carcinoma</tissue>
    </source>
</reference>
<reference key="11">
    <citation type="journal article" date="2008" name="Proc. Natl. Acad. Sci. U.S.A.">
        <title>A quantitative atlas of mitotic phosphorylation.</title>
        <authorList>
            <person name="Dephoure N."/>
            <person name="Zhou C."/>
            <person name="Villen J."/>
            <person name="Beausoleil S.A."/>
            <person name="Bakalarski C.E."/>
            <person name="Elledge S.J."/>
            <person name="Gygi S.P."/>
        </authorList>
    </citation>
    <scope>IDENTIFICATION BY MASS SPECTROMETRY [LARGE SCALE ANALYSIS]</scope>
    <source>
        <tissue>Cervix carcinoma</tissue>
    </source>
</reference>
<reference key="12">
    <citation type="journal article" date="2009" name="Mol. Cell. Proteomics">
        <title>Large-scale proteomics analysis of the human kinome.</title>
        <authorList>
            <person name="Oppermann F.S."/>
            <person name="Gnad F."/>
            <person name="Olsen J.V."/>
            <person name="Hornberger R."/>
            <person name="Greff Z."/>
            <person name="Keri G."/>
            <person name="Mann M."/>
            <person name="Daub H."/>
        </authorList>
    </citation>
    <scope>ACETYLATION [LARGE SCALE ANALYSIS] AT SER-2</scope>
    <scope>CLEAVAGE OF INITIATOR METHIONINE [LARGE SCALE ANALYSIS]</scope>
    <scope>IDENTIFICATION BY MASS SPECTROMETRY [LARGE SCALE ANALYSIS]</scope>
</reference>
<reference key="13">
    <citation type="journal article" date="2010" name="Sci. Signal.">
        <title>Quantitative phosphoproteomics reveals widespread full phosphorylation site occupancy during mitosis.</title>
        <authorList>
            <person name="Olsen J.V."/>
            <person name="Vermeulen M."/>
            <person name="Santamaria A."/>
            <person name="Kumar C."/>
            <person name="Miller M.L."/>
            <person name="Jensen L.J."/>
            <person name="Gnad F."/>
            <person name="Cox J."/>
            <person name="Jensen T.S."/>
            <person name="Nigg E.A."/>
            <person name="Brunak S."/>
            <person name="Mann M."/>
        </authorList>
    </citation>
    <scope>ACETYLATION [LARGE SCALE ANALYSIS] AT SER-2</scope>
    <scope>PHOSPHORYLATION [LARGE SCALE ANALYSIS] AT SER-231</scope>
    <scope>CLEAVAGE OF INITIATOR METHIONINE [LARGE SCALE ANALYSIS]</scope>
    <scope>IDENTIFICATION BY MASS SPECTROMETRY [LARGE SCALE ANALYSIS]</scope>
    <source>
        <tissue>Cervix carcinoma</tissue>
    </source>
</reference>
<reference key="14">
    <citation type="journal article" date="2011" name="BMC Syst. Biol.">
        <title>Initial characterization of the human central proteome.</title>
        <authorList>
            <person name="Burkard T.R."/>
            <person name="Planyavsky M."/>
            <person name="Kaupe I."/>
            <person name="Breitwieser F.P."/>
            <person name="Buerckstuemmer T."/>
            <person name="Bennett K.L."/>
            <person name="Superti-Furga G."/>
            <person name="Colinge J."/>
        </authorList>
    </citation>
    <scope>IDENTIFICATION BY MASS SPECTROMETRY [LARGE SCALE ANALYSIS]</scope>
</reference>
<reference key="15">
    <citation type="journal article" date="2012" name="Mol. Cell. Proteomics">
        <title>Comparative large-scale characterisation of plant vs. mammal proteins reveals similar and idiosyncratic N-alpha acetylation features.</title>
        <authorList>
            <person name="Bienvenut W.V."/>
            <person name="Sumpton D."/>
            <person name="Martinez A."/>
            <person name="Lilla S."/>
            <person name="Espagne C."/>
            <person name="Meinnel T."/>
            <person name="Giglione C."/>
        </authorList>
    </citation>
    <scope>ACETYLATION [LARGE SCALE ANALYSIS] AT SER-2</scope>
    <scope>CLEAVAGE OF INITIATOR METHIONINE [LARGE SCALE ANALYSIS]</scope>
    <scope>IDENTIFICATION BY MASS SPECTROMETRY [LARGE SCALE ANALYSIS]</scope>
</reference>
<reference key="16">
    <citation type="journal article" date="2012" name="Proc. Natl. Acad. Sci. U.S.A.">
        <title>N-terminal acetylome analyses and functional insights of the N-terminal acetyltransferase NatB.</title>
        <authorList>
            <person name="Van Damme P."/>
            <person name="Lasa M."/>
            <person name="Polevoda B."/>
            <person name="Gazquez C."/>
            <person name="Elosegui-Artola A."/>
            <person name="Kim D.S."/>
            <person name="De Juan-Pardo E."/>
            <person name="Demeyer K."/>
            <person name="Hole K."/>
            <person name="Larrea E."/>
            <person name="Timmerman E."/>
            <person name="Prieto J."/>
            <person name="Arnesen T."/>
            <person name="Sherman F."/>
            <person name="Gevaert K."/>
            <person name="Aldabe R."/>
        </authorList>
    </citation>
    <scope>ACETYLATION [LARGE SCALE ANALYSIS] AT SER-2</scope>
    <scope>CLEAVAGE OF INITIATOR METHIONINE [LARGE SCALE ANALYSIS]</scope>
    <scope>IDENTIFICATION BY MASS SPECTROMETRY [LARGE SCALE ANALYSIS]</scope>
</reference>
<reference key="17">
    <citation type="journal article" date="2013" name="J. Proteome Res.">
        <title>Toward a comprehensive characterization of a human cancer cell phosphoproteome.</title>
        <authorList>
            <person name="Zhou H."/>
            <person name="Di Palma S."/>
            <person name="Preisinger C."/>
            <person name="Peng M."/>
            <person name="Polat A.N."/>
            <person name="Heck A.J."/>
            <person name="Mohammed S."/>
        </authorList>
    </citation>
    <scope>PHOSPHORYLATION [LARGE SCALE ANALYSIS] AT SER-2 AND SER-13</scope>
    <scope>IDENTIFICATION BY MASS SPECTROMETRY [LARGE SCALE ANALYSIS]</scope>
    <source>
        <tissue>Erythroleukemia</tissue>
    </source>
</reference>
<reference key="18">
    <citation type="journal article" date="2004" name="Proc. Natl. Acad. Sci. U.S.A.">
        <title>Structures of thymidine kinase 1 of human and mycoplasmic origin.</title>
        <authorList>
            <person name="Welin M."/>
            <person name="Kosinska U."/>
            <person name="Mikkelsen N.E."/>
            <person name="Carnrot C."/>
            <person name="Zhu C."/>
            <person name="Wang L."/>
            <person name="Eriksson S."/>
            <person name="Munch-Petersen B."/>
            <person name="Eklund H."/>
        </authorList>
    </citation>
    <scope>X-RAY CRYSTALLOGRAPHY (2.40 ANGSTROMS) OF 1-193 IN COMPLEX WITH ZINC IONS AND TTP</scope>
    <scope>SUBUNIT</scope>
</reference>
<reference key="19">
    <citation type="journal article" date="2005" name="FEBS Lett.">
        <title>Structure of a type II thymidine kinase with bound dTTP.</title>
        <authorList>
            <person name="Birringer M.S."/>
            <person name="Claus M.T."/>
            <person name="Folkers G."/>
            <person name="Kloer D.P."/>
            <person name="Schulz G.E."/>
            <person name="Scapozza L."/>
        </authorList>
    </citation>
    <scope>X-RAY CRYSTALLOGRAPHY (1.83 ANGSTROMS) OF 15-194 IN COMPLEX WITH ZINC IONS AND TTP</scope>
</reference>
<reference key="20">
    <citation type="journal article" date="2007" name="J. Mol. Biol.">
        <title>Binding of ATP to TK1-like enzymes is associated with a conformational change in the quaternary structure.</title>
        <authorList>
            <person name="Segura-Pena D."/>
            <person name="Lutz S."/>
            <person name="Monnerjahn C."/>
            <person name="Konrad M."/>
            <person name="Lavie A."/>
        </authorList>
    </citation>
    <scope>X-RAY CRYSTALLOGRAPHY (2.30 ANGSTROMS) IN COMPLEX WITH ZINC IONS; SUBSTRATE AND ATP ANALOG</scope>
    <scope>SUBUNIT</scope>
</reference>
<reference key="21">
    <citation type="journal article" date="2012" name="FEBS J.">
        <title>Comparative active-site mutation study of human and Caenorhabditis elegans thymidine kinase 1.</title>
        <authorList>
            <person name="Skovgaard T."/>
            <person name="Uhlin U."/>
            <person name="Munch-Petersen B."/>
        </authorList>
    </citation>
    <scope>X-RAY CRYSTALLOGRAPHY (2.2 ANGSTROMS) OF 1-193 OF MUTANT SER-163</scope>
    <scope>ZINC-BINDING SITES</scope>
    <scope>MUTAGENESIS OF MET-28; LEU-124 AND THR-163</scope>
    <scope>CATALYTIC ACTIVITY</scope>
    <scope>FUNCTION</scope>
    <scope>SUBUNIT</scope>
</reference>
<feature type="initiator methionine" description="Removed" evidence="19 20 21 22">
    <location>
        <position position="1"/>
    </location>
</feature>
<feature type="chain" id="PRO_0000174948" description="Thymidine kinase, cytosolic">
    <location>
        <begin position="2"/>
        <end position="234"/>
    </location>
</feature>
<feature type="short sequence motif" description="KEN box" evidence="3">
    <location>
        <begin position="203"/>
        <end position="205"/>
    </location>
</feature>
<feature type="active site" description="Proton acceptor" evidence="1">
    <location>
        <position position="98"/>
    </location>
</feature>
<feature type="binding site" evidence="4 5 6 7 14 15 16 17">
    <location>
        <begin position="26"/>
        <end position="33"/>
    </location>
    <ligand>
        <name>ATP</name>
        <dbReference type="ChEBI" id="CHEBI:30616"/>
    </ligand>
</feature>
<feature type="binding site" evidence="4 5 7 14 15 17">
    <location>
        <begin position="58"/>
        <end position="60"/>
    </location>
    <ligand>
        <name>ATP</name>
        <dbReference type="ChEBI" id="CHEBI:30616"/>
    </ligand>
</feature>
<feature type="binding site" evidence="5 7 14 17">
    <location>
        <begin position="97"/>
        <end position="100"/>
    </location>
    <ligand>
        <name>ATP</name>
        <dbReference type="ChEBI" id="CHEBI:30616"/>
    </ligand>
</feature>
<feature type="binding site" evidence="4 5 6 7 14 15 16 17">
    <location>
        <position position="128"/>
    </location>
    <ligand>
        <name>substrate</name>
    </ligand>
</feature>
<feature type="binding site" evidence="4 5 6 7 14 15 16 17">
    <location>
        <position position="153"/>
    </location>
    <ligand>
        <name>Zn(2+)</name>
        <dbReference type="ChEBI" id="CHEBI:29105"/>
    </ligand>
</feature>
<feature type="binding site" evidence="4 5 6 7 14 15 16 17">
    <location>
        <position position="156"/>
    </location>
    <ligand>
        <name>Zn(2+)</name>
        <dbReference type="ChEBI" id="CHEBI:29105"/>
    </ligand>
</feature>
<feature type="binding site" evidence="4 5 7 14 15 17">
    <location>
        <begin position="172"/>
        <end position="176"/>
    </location>
    <ligand>
        <name>substrate</name>
    </ligand>
</feature>
<feature type="binding site" evidence="4 5 6 7 14 15 16">
    <location>
        <position position="181"/>
    </location>
    <ligand>
        <name>substrate</name>
    </ligand>
</feature>
<feature type="binding site" evidence="4 5 6 7 14 15 16 17">
    <location>
        <position position="185"/>
    </location>
    <ligand>
        <name>Zn(2+)</name>
        <dbReference type="ChEBI" id="CHEBI:29105"/>
    </ligand>
</feature>
<feature type="binding site" evidence="4 5 6 7 14 15 16 17">
    <location>
        <position position="188"/>
    </location>
    <ligand>
        <name>Zn(2+)</name>
        <dbReference type="ChEBI" id="CHEBI:29105"/>
    </ligand>
</feature>
<feature type="modified residue" description="N-acetylserine" evidence="19 20 21 22">
    <location>
        <position position="2"/>
    </location>
</feature>
<feature type="modified residue" description="Phosphoserine" evidence="23">
    <location>
        <position position="2"/>
    </location>
</feature>
<feature type="modified residue" description="Phosphoserine" evidence="2 8 23">
    <location>
        <position position="13"/>
    </location>
</feature>
<feature type="modified residue" description="Phosphoserine" evidence="18 20">
    <location>
        <position position="231"/>
    </location>
</feature>
<feature type="mutagenesis site" description="Loss of phosphorylation. Constant expression during cell cycle. No effect on ATP-induced tetramerization." evidence="2 3 8">
    <original>S</original>
    <variation>A</variation>
    <location>
        <position position="13"/>
    </location>
</feature>
<feature type="mutagenesis site" description="Perturbes ATP-induced tetramerization. Retaines the enzymatic function with decreased thymidine affinity and catalytic efficiency." evidence="2">
    <original>S</original>
    <variation>D</variation>
    <location>
        <position position="13"/>
    </location>
</feature>
<feature type="mutagenesis site" description="300-fold higher KM for thymidine." evidence="7">
    <original>M</original>
    <variation>I</variation>
    <variation>A</variation>
    <location>
        <position position="28"/>
    </location>
</feature>
<feature type="mutagenesis site" description="30-fold higher KM for thymidine." evidence="7">
    <original>L</original>
    <variation>A</variation>
    <location>
        <position position="124"/>
    </location>
</feature>
<feature type="mutagenesis site" description="50-fold higher KM for thymidine." evidence="7">
    <original>T</original>
    <variation>S</variation>
    <location>
        <position position="163"/>
    </location>
</feature>
<feature type="mutagenesis site" description="No effect on phosphorylation." evidence="8">
    <original>S</original>
    <variation>P</variation>
    <location>
        <position position="194"/>
    </location>
</feature>
<feature type="mutagenesis site" description="Resistant to degradation in the mitotic exit phase." evidence="3">
    <original>KEN</original>
    <variation>AAA</variation>
    <location>
        <begin position="203"/>
        <end position="205"/>
    </location>
</feature>
<feature type="mutagenesis site" description="Resistant to degradation in the mitotic exit phase." evidence="3">
    <original>KE</original>
    <variation>AA</variation>
    <location>
        <begin position="203"/>
        <end position="204"/>
    </location>
</feature>
<feature type="mutagenesis site" description="Resistant to degradation in the mitotic exit phase." evidence="3">
    <original>K</original>
    <variation>A</variation>
    <location>
        <position position="203"/>
    </location>
</feature>
<feature type="sequence conflict" description="In Ref. 1; AAA61187 and 2; AAA61191." evidence="9" ref="1 2">
    <original>V</original>
    <variation>M</variation>
    <location>
        <position position="106"/>
    </location>
</feature>
<feature type="strand" evidence="24">
    <location>
        <begin position="20"/>
        <end position="26"/>
    </location>
</feature>
<feature type="helix" evidence="24">
    <location>
        <begin position="32"/>
        <end position="45"/>
    </location>
</feature>
<feature type="strand" evidence="24">
    <location>
        <begin position="50"/>
        <end position="55"/>
    </location>
</feature>
<feature type="helix" evidence="24">
    <location>
        <begin position="61"/>
        <end position="63"/>
    </location>
</feature>
<feature type="helix" evidence="24">
    <location>
        <begin position="67"/>
        <end position="72"/>
    </location>
</feature>
<feature type="strand" evidence="24">
    <location>
        <begin position="73"/>
        <end position="80"/>
    </location>
</feature>
<feature type="helix" evidence="24">
    <location>
        <begin position="81"/>
        <end position="84"/>
    </location>
</feature>
<feature type="helix" evidence="24">
    <location>
        <begin position="85"/>
        <end position="89"/>
    </location>
</feature>
<feature type="strand" evidence="24">
    <location>
        <begin position="92"/>
        <end position="98"/>
    </location>
</feature>
<feature type="helix" evidence="24">
    <location>
        <begin position="99"/>
        <end position="101"/>
    </location>
</feature>
<feature type="helix" evidence="24">
    <location>
        <begin position="105"/>
        <end position="114"/>
    </location>
</feature>
<feature type="strand" evidence="24">
    <location>
        <begin position="118"/>
        <end position="126"/>
    </location>
</feature>
<feature type="strand" evidence="24">
    <location>
        <begin position="130"/>
        <end position="132"/>
    </location>
</feature>
<feature type="helix" evidence="24">
    <location>
        <begin position="136"/>
        <end position="142"/>
    </location>
</feature>
<feature type="strand" evidence="24">
    <location>
        <begin position="144"/>
        <end position="148"/>
    </location>
</feature>
<feature type="turn" evidence="24">
    <location>
        <begin position="154"/>
        <end position="156"/>
    </location>
</feature>
<feature type="strand" evidence="24">
    <location>
        <begin position="158"/>
        <end position="160"/>
    </location>
</feature>
<feature type="strand" evidence="24">
    <location>
        <begin position="162"/>
        <end position="167"/>
    </location>
</feature>
<feature type="turn" evidence="24">
    <location>
        <begin position="178"/>
        <end position="180"/>
    </location>
</feature>
<feature type="strand" evidence="24">
    <location>
        <begin position="181"/>
        <end position="184"/>
    </location>
</feature>
<feature type="helix" evidence="24">
    <location>
        <begin position="186"/>
        <end position="189"/>
    </location>
</feature>
<accession>P04183</accession>
<accession>B2RC58</accession>
<accession>Q969V0</accession>
<accession>Q9UMG9</accession>
<gene>
    <name evidence="13" type="primary">TK1</name>
</gene>
<keyword id="KW-0002">3D-structure</keyword>
<keyword id="KW-0007">Acetylation</keyword>
<keyword id="KW-0067">ATP-binding</keyword>
<keyword id="KW-0963">Cytoplasm</keyword>
<keyword id="KW-0237">DNA synthesis</keyword>
<keyword id="KW-0418">Kinase</keyword>
<keyword id="KW-0479">Metal-binding</keyword>
<keyword id="KW-0547">Nucleotide-binding</keyword>
<keyword id="KW-0597">Phosphoprotein</keyword>
<keyword id="KW-1267">Proteomics identification</keyword>
<keyword id="KW-1185">Reference proteome</keyword>
<keyword id="KW-0808">Transferase</keyword>
<keyword id="KW-0832">Ubl conjugation</keyword>
<keyword id="KW-0862">Zinc</keyword>
<dbReference type="EC" id="2.7.1.21" evidence="2 7"/>
<dbReference type="EMBL" id="K02581">
    <property type="protein sequence ID" value="AAA61187.1"/>
    <property type="molecule type" value="mRNA"/>
</dbReference>
<dbReference type="EMBL" id="M15205">
    <property type="protein sequence ID" value="AAA61191.1"/>
    <property type="molecule type" value="Genomic_DNA"/>
</dbReference>
<dbReference type="EMBL" id="AK314950">
    <property type="protein sequence ID" value="BAG37455.1"/>
    <property type="molecule type" value="mRNA"/>
</dbReference>
<dbReference type="EMBL" id="BT006941">
    <property type="protein sequence ID" value="AAP35587.1"/>
    <property type="molecule type" value="mRNA"/>
</dbReference>
<dbReference type="EMBL" id="BC006484">
    <property type="protein sequence ID" value="AAH06484.1"/>
    <property type="molecule type" value="mRNA"/>
</dbReference>
<dbReference type="EMBL" id="BC007872">
    <property type="protein sequence ID" value="AAH07872.1"/>
    <property type="molecule type" value="mRNA"/>
</dbReference>
<dbReference type="EMBL" id="BC007986">
    <property type="protein sequence ID" value="AAH07986.1"/>
    <property type="molecule type" value="mRNA"/>
</dbReference>
<dbReference type="EMBL" id="M13643">
    <property type="protein sequence ID" value="AAA61189.1"/>
    <property type="molecule type" value="Genomic_DNA"/>
</dbReference>
<dbReference type="CCDS" id="CCDS11754.1"/>
<dbReference type="PIR" id="A27318">
    <property type="entry name" value="KIHUT"/>
</dbReference>
<dbReference type="RefSeq" id="NP_003249.3">
    <property type="nucleotide sequence ID" value="NM_003258.5"/>
</dbReference>
<dbReference type="PDB" id="1W4R">
    <property type="method" value="X-ray"/>
    <property type="resolution" value="1.83 A"/>
    <property type="chains" value="A/B/C/D/E/F/G/H=15-194"/>
</dbReference>
<dbReference type="PDB" id="1XBT">
    <property type="method" value="X-ray"/>
    <property type="resolution" value="2.40 A"/>
    <property type="chains" value="A/B/C/D/E/F/G/H=1-193"/>
</dbReference>
<dbReference type="PDB" id="2ORV">
    <property type="method" value="X-ray"/>
    <property type="resolution" value="2.30 A"/>
    <property type="chains" value="A/B=1-234"/>
</dbReference>
<dbReference type="PDB" id="2WVJ">
    <property type="method" value="X-ray"/>
    <property type="resolution" value="2.20 A"/>
    <property type="chains" value="A/B/C/D/E/F/G/H=1-193"/>
</dbReference>
<dbReference type="PDBsum" id="1W4R"/>
<dbReference type="PDBsum" id="1XBT"/>
<dbReference type="PDBsum" id="2ORV"/>
<dbReference type="PDBsum" id="2WVJ"/>
<dbReference type="SMR" id="P04183"/>
<dbReference type="BioGRID" id="112938">
    <property type="interactions" value="245"/>
</dbReference>
<dbReference type="FunCoup" id="P04183">
    <property type="interactions" value="532"/>
</dbReference>
<dbReference type="IntAct" id="P04183">
    <property type="interactions" value="190"/>
</dbReference>
<dbReference type="MINT" id="P04183"/>
<dbReference type="STRING" id="9606.ENSP00000468425"/>
<dbReference type="BindingDB" id="P04183"/>
<dbReference type="ChEMBL" id="CHEMBL2883"/>
<dbReference type="DrugBank" id="DB02921">
    <property type="generic name" value="(South)-Methanocarba-Thymidine"/>
</dbReference>
<dbReference type="DrugBank" id="DB02594">
    <property type="generic name" value="2'-Deoxycytidine"/>
</dbReference>
<dbReference type="DrugBank" id="DB02256">
    <property type="generic name" value="2'-Deoxyuridine"/>
</dbReference>
<dbReference type="DrugBank" id="DB03804">
    <property type="generic name" value="5-Bromothienyldeoxyuridine"/>
</dbReference>
<dbReference type="DrugBank" id="DB02324">
    <property type="generic name" value="5-Iodo-2'-Deoxyuridine-5'-Monophosphate"/>
</dbReference>
<dbReference type="DrugBank" id="DB02500">
    <property type="generic name" value="6-(Dihydroxy-Isobutyl)-Thymine"/>
</dbReference>
<dbReference type="DrugBank" id="DB04139">
    <property type="generic name" value="6-Hydroxypropylthymine"/>
</dbReference>
<dbReference type="DrugBank" id="DB02495">
    <property type="generic name" value="9-(4-hydroxybutyl)-N2-phenylguanine"/>
</dbReference>
<dbReference type="DrugBank" id="DB03312">
    <property type="generic name" value="Brivudine"/>
</dbReference>
<dbReference type="DrugBank" id="DB01692">
    <property type="generic name" value="Dithioerythritol"/>
</dbReference>
<dbReference type="DrugBank" id="DB13421">
    <property type="generic name" value="Edoxudine"/>
</dbReference>
<dbReference type="DrugBank" id="DB03280">
    <property type="generic name" value="p1-(5'-adenosyl)p5-(5'-thymidyl)pentaphosphate"/>
</dbReference>
<dbReference type="DrugBank" id="DB00299">
    <property type="generic name" value="Penciclovir"/>
</dbReference>
<dbReference type="DrugBank" id="DB02765">
    <property type="generic name" value="R-9-(2-hydroxypropyl)adenine"/>
</dbReference>
<dbReference type="DrugBank" id="DB05119">
    <property type="generic name" value="Rilapladib"/>
</dbReference>
<dbReference type="DrugBank" id="DB03000">
    <property type="generic name" value="S-9-(2-hydroxypropyl)adenine"/>
</dbReference>
<dbReference type="DrugBank" id="DB04485">
    <property type="generic name" value="Thymidine"/>
</dbReference>
<dbReference type="DrugBank" id="DB02452">
    <property type="generic name" value="Thymidine 5'-triphosphate"/>
</dbReference>
<dbReference type="DrugBank" id="DB01643">
    <property type="generic name" value="Thymidine monophosphate"/>
</dbReference>
<dbReference type="DrugBank" id="DB00432">
    <property type="generic name" value="Trifluridine"/>
</dbReference>
<dbReference type="DrugBank" id="DB00495">
    <property type="generic name" value="Zidovudine"/>
</dbReference>
<dbReference type="DrugCentral" id="P04183"/>
<dbReference type="GlyGen" id="P04183">
    <property type="glycosylation" value="1 site, 1 O-linked glycan (1 site)"/>
</dbReference>
<dbReference type="iPTMnet" id="P04183"/>
<dbReference type="PhosphoSitePlus" id="P04183"/>
<dbReference type="BioMuta" id="TK1"/>
<dbReference type="DMDM" id="23503074"/>
<dbReference type="jPOST" id="P04183"/>
<dbReference type="MassIVE" id="P04183"/>
<dbReference type="PaxDb" id="9606-ENSP00000301634"/>
<dbReference type="PeptideAtlas" id="P04183"/>
<dbReference type="ProteomicsDB" id="51674"/>
<dbReference type="Pumba" id="P04183"/>
<dbReference type="ABCD" id="P04183">
    <property type="antibodies" value="2 sequenced antibodies"/>
</dbReference>
<dbReference type="Antibodypedia" id="3322">
    <property type="antibodies" value="491 antibodies from 41 providers"/>
</dbReference>
<dbReference type="DNASU" id="7083"/>
<dbReference type="Ensembl" id="ENST00000301634.12">
    <property type="protein sequence ID" value="ENSP00000301634.6"/>
    <property type="gene ID" value="ENSG00000167900.12"/>
</dbReference>
<dbReference type="GeneID" id="7083"/>
<dbReference type="KEGG" id="hsa:7083"/>
<dbReference type="MANE-Select" id="ENST00000301634.12">
    <property type="protein sequence ID" value="ENSP00000301634.6"/>
    <property type="RefSeq nucleotide sequence ID" value="NM_003258.5"/>
    <property type="RefSeq protein sequence ID" value="NP_003249.3"/>
</dbReference>
<dbReference type="UCSC" id="uc002juw.3">
    <property type="organism name" value="human"/>
</dbReference>
<dbReference type="AGR" id="HGNC:11830"/>
<dbReference type="CTD" id="7083"/>
<dbReference type="DisGeNET" id="7083"/>
<dbReference type="GeneCards" id="TK1"/>
<dbReference type="HGNC" id="HGNC:11830">
    <property type="gene designation" value="TK1"/>
</dbReference>
<dbReference type="HPA" id="ENSG00000167900">
    <property type="expression patterns" value="Tissue enhanced (bone)"/>
</dbReference>
<dbReference type="MIM" id="188300">
    <property type="type" value="gene"/>
</dbReference>
<dbReference type="neXtProt" id="NX_P04183"/>
<dbReference type="OpenTargets" id="ENSG00000167900"/>
<dbReference type="PharmGKB" id="PA352"/>
<dbReference type="VEuPathDB" id="HostDB:ENSG00000167900"/>
<dbReference type="eggNOG" id="KOG3125">
    <property type="taxonomic scope" value="Eukaryota"/>
</dbReference>
<dbReference type="GeneTree" id="ENSGT00390000011309"/>
<dbReference type="InParanoid" id="P04183"/>
<dbReference type="OMA" id="EAYEPRC"/>
<dbReference type="OrthoDB" id="439028at2759"/>
<dbReference type="PAN-GO" id="P04183">
    <property type="GO annotations" value="2 GO annotations based on evolutionary models"/>
</dbReference>
<dbReference type="PhylomeDB" id="P04183"/>
<dbReference type="TreeFam" id="TF314839"/>
<dbReference type="BioCyc" id="MetaCyc:HS09657-MONOMER"/>
<dbReference type="BRENDA" id="2.7.1.21">
    <property type="organism ID" value="2681"/>
</dbReference>
<dbReference type="PathwayCommons" id="P04183"/>
<dbReference type="Reactome" id="R-HSA-69205">
    <property type="pathway name" value="G1/S-Specific Transcription"/>
</dbReference>
<dbReference type="Reactome" id="R-HSA-73614">
    <property type="pathway name" value="Pyrimidine salvage"/>
</dbReference>
<dbReference type="SABIO-RK" id="P04183"/>
<dbReference type="SignaLink" id="P04183"/>
<dbReference type="SIGNOR" id="P04183"/>
<dbReference type="BioGRID-ORCS" id="7083">
    <property type="hits" value="26 hits in 1165 CRISPR screens"/>
</dbReference>
<dbReference type="ChiTaRS" id="TK1">
    <property type="organism name" value="human"/>
</dbReference>
<dbReference type="EvolutionaryTrace" id="P04183"/>
<dbReference type="GeneWiki" id="Thymidine_kinase_1"/>
<dbReference type="GenomeRNAi" id="7083"/>
<dbReference type="Pharos" id="P04183">
    <property type="development level" value="Tchem"/>
</dbReference>
<dbReference type="PRO" id="PR:P04183"/>
<dbReference type="Proteomes" id="UP000005640">
    <property type="component" value="Chromosome 17"/>
</dbReference>
<dbReference type="RNAct" id="P04183">
    <property type="molecule type" value="protein"/>
</dbReference>
<dbReference type="Bgee" id="ENSG00000167900">
    <property type="expression patterns" value="Expressed in endometrium epithelium and 127 other cell types or tissues"/>
</dbReference>
<dbReference type="ExpressionAtlas" id="P04183">
    <property type="expression patterns" value="baseline and differential"/>
</dbReference>
<dbReference type="GO" id="GO:0005829">
    <property type="term" value="C:cytosol"/>
    <property type="evidence" value="ECO:0000304"/>
    <property type="project" value="Reactome"/>
</dbReference>
<dbReference type="GO" id="GO:0005634">
    <property type="term" value="C:nucleus"/>
    <property type="evidence" value="ECO:0007669"/>
    <property type="project" value="GOC"/>
</dbReference>
<dbReference type="GO" id="GO:0005524">
    <property type="term" value="F:ATP binding"/>
    <property type="evidence" value="ECO:0007669"/>
    <property type="project" value="UniProtKB-KW"/>
</dbReference>
<dbReference type="GO" id="GO:0042802">
    <property type="term" value="F:identical protein binding"/>
    <property type="evidence" value="ECO:0000353"/>
    <property type="project" value="IntAct"/>
</dbReference>
<dbReference type="GO" id="GO:0004797">
    <property type="term" value="F:thymidine kinase activity"/>
    <property type="evidence" value="ECO:0000314"/>
    <property type="project" value="UniProtKB"/>
</dbReference>
<dbReference type="GO" id="GO:0008270">
    <property type="term" value="F:zinc ion binding"/>
    <property type="evidence" value="ECO:0000314"/>
    <property type="project" value="UniProtKB"/>
</dbReference>
<dbReference type="GO" id="GO:1904860">
    <property type="term" value="P:DNA synthesis involved in mitotic DNA replication"/>
    <property type="evidence" value="ECO:0000314"/>
    <property type="project" value="UniProt"/>
</dbReference>
<dbReference type="GO" id="GO:0006139">
    <property type="term" value="P:nucleobase-containing compound metabolic process"/>
    <property type="evidence" value="ECO:0000304"/>
    <property type="project" value="ProtInc"/>
</dbReference>
<dbReference type="GO" id="GO:0051289">
    <property type="term" value="P:protein homotetramerization"/>
    <property type="evidence" value="ECO:0000314"/>
    <property type="project" value="UniProtKB"/>
</dbReference>
<dbReference type="GO" id="GO:0046105">
    <property type="term" value="P:thymidine biosynthetic process"/>
    <property type="evidence" value="ECO:0000314"/>
    <property type="project" value="UniProt"/>
</dbReference>
<dbReference type="GO" id="GO:0046104">
    <property type="term" value="P:thymidine metabolic process"/>
    <property type="evidence" value="ECO:0000314"/>
    <property type="project" value="UniProtKB"/>
</dbReference>
<dbReference type="DisProt" id="DP02006"/>
<dbReference type="FunFam" id="3.30.60.20:FF:000028">
    <property type="entry name" value="Thymidine kinase"/>
    <property type="match status" value="1"/>
</dbReference>
<dbReference type="FunFam" id="3.40.50.300:FF:000761">
    <property type="entry name" value="Thymidine kinase"/>
    <property type="match status" value="1"/>
</dbReference>
<dbReference type="Gene3D" id="3.30.60.20">
    <property type="match status" value="1"/>
</dbReference>
<dbReference type="Gene3D" id="3.40.50.300">
    <property type="entry name" value="P-loop containing nucleotide triphosphate hydrolases"/>
    <property type="match status" value="1"/>
</dbReference>
<dbReference type="InterPro" id="IPR027417">
    <property type="entry name" value="P-loop_NTPase"/>
</dbReference>
<dbReference type="InterPro" id="IPR001267">
    <property type="entry name" value="Thymidine_kinase"/>
</dbReference>
<dbReference type="InterPro" id="IPR020633">
    <property type="entry name" value="Thymidine_kinase_CS"/>
</dbReference>
<dbReference type="PANTHER" id="PTHR11441">
    <property type="entry name" value="THYMIDINE KINASE"/>
    <property type="match status" value="1"/>
</dbReference>
<dbReference type="PANTHER" id="PTHR11441:SF0">
    <property type="entry name" value="THYMIDINE KINASE, CYTOSOLIC"/>
    <property type="match status" value="1"/>
</dbReference>
<dbReference type="Pfam" id="PF00265">
    <property type="entry name" value="TK"/>
    <property type="match status" value="1"/>
</dbReference>
<dbReference type="SUPFAM" id="SSF57716">
    <property type="entry name" value="Glucocorticoid receptor-like (DNA-binding domain)"/>
    <property type="match status" value="1"/>
</dbReference>
<dbReference type="SUPFAM" id="SSF52540">
    <property type="entry name" value="P-loop containing nucleoside triphosphate hydrolases"/>
    <property type="match status" value="1"/>
</dbReference>
<dbReference type="PROSITE" id="PS00603">
    <property type="entry name" value="TK_CELLULAR_TYPE"/>
    <property type="match status" value="1"/>
</dbReference>
<name>KITH_HUMAN</name>
<evidence type="ECO:0000255" key="1"/>
<evidence type="ECO:0000269" key="2">
    <source>
    </source>
</evidence>
<evidence type="ECO:0000269" key="3">
    <source>
    </source>
</evidence>
<evidence type="ECO:0000269" key="4">
    <source>
    </source>
</evidence>
<evidence type="ECO:0000269" key="5">
    <source>
    </source>
</evidence>
<evidence type="ECO:0000269" key="6">
    <source>
    </source>
</evidence>
<evidence type="ECO:0000269" key="7">
    <source>
    </source>
</evidence>
<evidence type="ECO:0000269" key="8">
    <source>
    </source>
</evidence>
<evidence type="ECO:0000305" key="9"/>
<evidence type="ECO:0000305" key="10">
    <source>
    </source>
</evidence>
<evidence type="ECO:0000305" key="11">
    <source>
    </source>
</evidence>
<evidence type="ECO:0000305" key="12">
    <source>
    </source>
</evidence>
<evidence type="ECO:0000312" key="13">
    <source>
        <dbReference type="HGNC" id="HGNC:11830"/>
    </source>
</evidence>
<evidence type="ECO:0007744" key="14">
    <source>
        <dbReference type="PDB" id="1W4R"/>
    </source>
</evidence>
<evidence type="ECO:0007744" key="15">
    <source>
        <dbReference type="PDB" id="1XBT"/>
    </source>
</evidence>
<evidence type="ECO:0007744" key="16">
    <source>
        <dbReference type="PDB" id="2ORV"/>
    </source>
</evidence>
<evidence type="ECO:0007744" key="17">
    <source>
        <dbReference type="PDB" id="2WVJ"/>
    </source>
</evidence>
<evidence type="ECO:0007744" key="18">
    <source>
    </source>
</evidence>
<evidence type="ECO:0007744" key="19">
    <source>
    </source>
</evidence>
<evidence type="ECO:0007744" key="20">
    <source>
    </source>
</evidence>
<evidence type="ECO:0007744" key="21">
    <source>
    </source>
</evidence>
<evidence type="ECO:0007744" key="22">
    <source>
    </source>
</evidence>
<evidence type="ECO:0007744" key="23">
    <source>
    </source>
</evidence>
<evidence type="ECO:0007829" key="24">
    <source>
        <dbReference type="PDB" id="1W4R"/>
    </source>
</evidence>
<sequence>MSCINLPTVLPGSPSKTRGQIQVILGPMFSGKSTELMRRVRRFQIAQYKCLVIKYAKDTRYSSSFCTHDRNTMEALPACLLRDVAQEALGVAVIGIDEGQFFPDIVEFCEAMANAGKTVIVAALDGTFQRKPFGAILNLVPLAESVVKLTAVCMECFREAAYTKRLGTEKEVEVIGGADKYHSVCRLCYFKKASGQPAGPDNKENCPVPGKPGEAVAARKLFAPQQILQCSPAN</sequence>
<comment type="function">
    <text evidence="7 8 11">Cell-cycle-regulated enzyme of importance in nucleotide metabolism (PubMed:9575153). Catalyzes the first enzymatic step in the salvage pathway converting thymidine into thymidine monophosphate (PubMed:22385435). Transcriptional regulation limits expression to the S phase of the cell cycle and transient expression coincides with the oscillation in the intracellular dTTP concentration (Probable). Also important for the activation of anticancer and antiviral nucleoside analog prodrugs such as 1-b-d-arabinofuranosylcytosine (AraC) and 3c-azido-3c-deoxythymidine (AZT) (PubMed:22385435).</text>
</comment>
<comment type="catalytic activity">
    <reaction evidence="2 7">
        <text>thymidine + ATP = dTMP + ADP + H(+)</text>
        <dbReference type="Rhea" id="RHEA:19129"/>
        <dbReference type="ChEBI" id="CHEBI:15378"/>
        <dbReference type="ChEBI" id="CHEBI:17748"/>
        <dbReference type="ChEBI" id="CHEBI:30616"/>
        <dbReference type="ChEBI" id="CHEBI:63528"/>
        <dbReference type="ChEBI" id="CHEBI:456216"/>
        <dbReference type="EC" id="2.7.1.21"/>
    </reaction>
    <physiologicalReaction direction="left-to-right" evidence="10 12">
        <dbReference type="Rhea" id="RHEA:19130"/>
    </physiologicalReaction>
</comment>
<comment type="biophysicochemical properties">
    <kinetics>
        <KM evidence="7">1.4 uM for thymidine</KM>
        <KM evidence="2">0.54 uM for thymidine</KM>
        <KM evidence="7">0.52 uM for AZT</KM>
        <Vmax evidence="7">26.6 umol/min/mg enzyme toward thymidine</Vmax>
        <Vmax evidence="7">10.0 umol/min/mg enzyme toward AZT</Vmax>
        <text evidence="2 7">Kcats are 9.5 sec(-1) and 3.5 sec(-1) with thymidine and AZT as substrates, respectively (PubMed:22385435). Kcat is 282 min(-1) with thymidine (PubMed:14697231).</text>
    </kinetics>
</comment>
<comment type="subunit">
    <text evidence="2 3 4 5 6 7">Homotetramer (PubMed:14697231, PubMed:15611477, PubMed:15733844, PubMed:17407781, PubMed:22385435). Tetramerization from dimerization is induced by ATP and increases catalytic efficiency due to a high affinity for thymidine (PubMed:14697231). Tetramerization is inhibited by phosphorylation at Ser-13 (PubMed:14697231). Interacts (via the KEN box) with FZR1 (PubMed:14701726).</text>
</comment>
<comment type="interaction">
    <interactant intactId="EBI-712550">
        <id>P04183</id>
    </interactant>
    <interactant intactId="EBI-77613">
        <id>P05067</id>
        <label>APP</label>
    </interactant>
    <organismsDiffer>false</organismsDiffer>
    <experiments>3</experiments>
</comment>
<comment type="interaction">
    <interactant intactId="EBI-712550">
        <id>P04183</id>
    </interactant>
    <interactant intactId="EBI-12006120">
        <id>A0A087WZT3</id>
        <label>BOLA2-SMG1P6</label>
    </interactant>
    <organismsDiffer>false</organismsDiffer>
    <experiments>3</experiments>
</comment>
<comment type="interaction">
    <interactant intactId="EBI-712550">
        <id>P04183</id>
    </interactant>
    <interactant intactId="EBI-399080">
        <id>Q92993</id>
        <label>KAT5</label>
    </interactant>
    <organismsDiffer>false</organismsDiffer>
    <experiments>3</experiments>
</comment>
<comment type="interaction">
    <interactant intactId="EBI-712550">
        <id>P04183</id>
    </interactant>
    <interactant intactId="EBI-10194128">
        <id>Q1RN33</id>
        <label>MAGEA4</label>
    </interactant>
    <organismsDiffer>false</organismsDiffer>
    <experiments>3</experiments>
</comment>
<comment type="interaction">
    <interactant intactId="EBI-712550">
        <id>P04183</id>
    </interactant>
    <interactant intactId="EBI-712550">
        <id>P04183</id>
        <label>TK1</label>
    </interactant>
    <organismsDiffer>false</organismsDiffer>
    <experiments>2</experiments>
</comment>
<comment type="subcellular location">
    <subcellularLocation>
        <location>Cytoplasm</location>
    </subcellularLocation>
</comment>
<comment type="developmental stage">
    <text evidence="3">Significantly increased in the cells during progression to the S and M phases, and becomes barely detectable in the early G(1) phase by a proteolytic control during mitotic exit.</text>
</comment>
<comment type="domain">
    <text evidence="3">KEN box sequence located in the C-terminal region is required for its mitotic degradation by the APC/C-FZR1 ubiquitin ligase and interaction capability with FZR1.</text>
</comment>
<comment type="PTM">
    <text evidence="2 8">Phosphorylated on Ser-13 in mitosis. Phosphorylation of Ser-13 by CDK1 during mitosis reduces homotetramerization and catalytic efficiency when DNA replication is complete and intracellular TK1 is still present at a high level (PubMed:14697231, PubMed:9575153).</text>
</comment>
<comment type="PTM">
    <text evidence="3">Polyubiquitinated. Postmitosis, ubiquitination leads to proteasomal degradation. The KEN box sequence located at the C-terminal region targets for degradation by the anaphase promoting complex (APC/C) activated and rate-limited by FZR1.</text>
</comment>
<comment type="miscellaneous">
    <text>Two forms have been identified in animal cells, one in cytosol and one in mitochondria. Activity of the cytosolic enzyme is high in proliferating cells and peaks during the S-phase of the cell cycle; it is very low in resting cells.</text>
</comment>
<comment type="similarity">
    <text evidence="9">Belongs to the thymidine kinase family.</text>
</comment>
<proteinExistence type="evidence at protein level"/>
<organism>
    <name type="scientific">Homo sapiens</name>
    <name type="common">Human</name>
    <dbReference type="NCBI Taxonomy" id="9606"/>
    <lineage>
        <taxon>Eukaryota</taxon>
        <taxon>Metazoa</taxon>
        <taxon>Chordata</taxon>
        <taxon>Craniata</taxon>
        <taxon>Vertebrata</taxon>
        <taxon>Euteleostomi</taxon>
        <taxon>Mammalia</taxon>
        <taxon>Eutheria</taxon>
        <taxon>Euarchontoglires</taxon>
        <taxon>Primates</taxon>
        <taxon>Haplorrhini</taxon>
        <taxon>Catarrhini</taxon>
        <taxon>Hominidae</taxon>
        <taxon>Homo</taxon>
    </lineage>
</organism>
<protein>
    <recommendedName>
        <fullName evidence="9">Thymidine kinase, cytosolic</fullName>
        <ecNumber evidence="2 7">2.7.1.21</ecNumber>
    </recommendedName>
</protein>